<accession>A1JKW8</accession>
<name>MDTD_YERE8</name>
<evidence type="ECO:0000255" key="1">
    <source>
        <dbReference type="HAMAP-Rule" id="MF_01577"/>
    </source>
</evidence>
<evidence type="ECO:0000305" key="2"/>
<keyword id="KW-0997">Cell inner membrane</keyword>
<keyword id="KW-1003">Cell membrane</keyword>
<keyword id="KW-0472">Membrane</keyword>
<keyword id="KW-0812">Transmembrane</keyword>
<keyword id="KW-1133">Transmembrane helix</keyword>
<keyword id="KW-0813">Transport</keyword>
<comment type="subcellular location">
    <subcellularLocation>
        <location evidence="1">Cell inner membrane</location>
        <topology evidence="1">Multi-pass membrane protein</topology>
    </subcellularLocation>
</comment>
<comment type="similarity">
    <text evidence="1">Belongs to the major facilitator superfamily. TCR/Tet family.</text>
</comment>
<comment type="sequence caution" evidence="2">
    <conflict type="erroneous initiation">
        <sequence resource="EMBL-CDS" id="CAL11202"/>
    </conflict>
</comment>
<reference key="1">
    <citation type="journal article" date="2006" name="PLoS Genet.">
        <title>The complete genome sequence and comparative genome analysis of the high pathogenicity Yersinia enterocolitica strain 8081.</title>
        <authorList>
            <person name="Thomson N.R."/>
            <person name="Howard S."/>
            <person name="Wren B.W."/>
            <person name="Holden M.T.G."/>
            <person name="Crossman L."/>
            <person name="Challis G.L."/>
            <person name="Churcher C."/>
            <person name="Mungall K."/>
            <person name="Brooks K."/>
            <person name="Chillingworth T."/>
            <person name="Feltwell T."/>
            <person name="Abdellah Z."/>
            <person name="Hauser H."/>
            <person name="Jagels K."/>
            <person name="Maddison M."/>
            <person name="Moule S."/>
            <person name="Sanders M."/>
            <person name="Whitehead S."/>
            <person name="Quail M.A."/>
            <person name="Dougan G."/>
            <person name="Parkhill J."/>
            <person name="Prentice M.B."/>
        </authorList>
    </citation>
    <scope>NUCLEOTIDE SEQUENCE [LARGE SCALE GENOMIC DNA]</scope>
    <source>
        <strain>NCTC 13174 / 8081</strain>
    </source>
</reference>
<proteinExistence type="inferred from homology"/>
<feature type="chain" id="PRO_0000365292" description="Putative multidrug resistance protein MdtD">
    <location>
        <begin position="1"/>
        <end position="469"/>
    </location>
</feature>
<feature type="transmembrane region" description="Helical" evidence="1">
    <location>
        <begin position="8"/>
        <end position="28"/>
    </location>
</feature>
<feature type="transmembrane region" description="Helical" evidence="1">
    <location>
        <begin position="45"/>
        <end position="65"/>
    </location>
</feature>
<feature type="transmembrane region" description="Helical" evidence="1">
    <location>
        <begin position="68"/>
        <end position="88"/>
    </location>
</feature>
<feature type="transmembrane region" description="Helical" evidence="1">
    <location>
        <begin position="102"/>
        <end position="122"/>
    </location>
</feature>
<feature type="transmembrane region" description="Helical" evidence="1">
    <location>
        <begin position="134"/>
        <end position="154"/>
    </location>
</feature>
<feature type="transmembrane region" description="Helical" evidence="1">
    <location>
        <begin position="161"/>
        <end position="181"/>
    </location>
</feature>
<feature type="transmembrane region" description="Helical" evidence="1">
    <location>
        <begin position="191"/>
        <end position="211"/>
    </location>
</feature>
<feature type="transmembrane region" description="Helical" evidence="1">
    <location>
        <begin position="215"/>
        <end position="235"/>
    </location>
</feature>
<feature type="transmembrane region" description="Helical" evidence="1">
    <location>
        <begin position="263"/>
        <end position="283"/>
    </location>
</feature>
<feature type="transmembrane region" description="Helical" evidence="1">
    <location>
        <begin position="286"/>
        <end position="306"/>
    </location>
</feature>
<feature type="transmembrane region" description="Helical" evidence="1">
    <location>
        <begin position="338"/>
        <end position="358"/>
    </location>
</feature>
<feature type="transmembrane region" description="Helical" evidence="1">
    <location>
        <begin position="392"/>
        <end position="412"/>
    </location>
</feature>
<feature type="transmembrane region" description="Helical" evidence="1">
    <location>
        <begin position="426"/>
        <end position="446"/>
    </location>
</feature>
<organism>
    <name type="scientific">Yersinia enterocolitica serotype O:8 / biotype 1B (strain NCTC 13174 / 8081)</name>
    <dbReference type="NCBI Taxonomy" id="393305"/>
    <lineage>
        <taxon>Bacteria</taxon>
        <taxon>Pseudomonadati</taxon>
        <taxon>Pseudomonadota</taxon>
        <taxon>Gammaproteobacteria</taxon>
        <taxon>Enterobacterales</taxon>
        <taxon>Yersiniaceae</taxon>
        <taxon>Yersinia</taxon>
    </lineage>
</organism>
<sequence>MTGIRAQLWIVAFGFFMQTLDTTIVNTALPSMAASLGENPLRMQSVIVSYVLTVAVMLPASGWLADRVGVKWVFFSAIILFTLGSLLCAQAETLNELISSRVIQGIGGAMMVPVGRLTVMKIVPREQYMSAMAFVTLPGQIGPLVGPALGGFLVEYASWHWIFLINLPVGVVGALATLWLMPNYTTRTRRFDISGFIMLAIGMATLTLALDGHKGLGLPPLAIAGLILCGILALAGYWWHAKGNSSALFTLRLFNNKSYSLGLIGSMSARIGSGMLPFMTPVFLQIGLGFTPFHAGLMMIPMIIGSMGMKRIIVRVVNRFGYRRVLVSATLLLAVVSLSFPLVALMGWTLLLPIVLFFQGMLNALRFSTMNTLALKDLPNRLASSGNSLLSMVMQLSMSLGVSTAGILLGVFAHNQVVTNTPATHSAFLYSYICMAIIIALPALIFNRVPADTGTNRNLPRASAKAANR</sequence>
<dbReference type="EMBL" id="AM286415">
    <property type="protein sequence ID" value="CAL11202.1"/>
    <property type="status" value="ALT_INIT"/>
    <property type="molecule type" value="Genomic_DNA"/>
</dbReference>
<dbReference type="RefSeq" id="WP_042661347.1">
    <property type="nucleotide sequence ID" value="NC_008800.1"/>
</dbReference>
<dbReference type="RefSeq" id="YP_001005436.1">
    <property type="nucleotide sequence ID" value="NC_008800.1"/>
</dbReference>
<dbReference type="SMR" id="A1JKW8"/>
<dbReference type="KEGG" id="yen:YE1106"/>
<dbReference type="PATRIC" id="fig|393305.7.peg.1205"/>
<dbReference type="eggNOG" id="COG0477">
    <property type="taxonomic scope" value="Bacteria"/>
</dbReference>
<dbReference type="HOGENOM" id="CLU_000960_28_0_6"/>
<dbReference type="OrthoDB" id="9812221at2"/>
<dbReference type="Proteomes" id="UP000000642">
    <property type="component" value="Chromosome"/>
</dbReference>
<dbReference type="GO" id="GO:0005886">
    <property type="term" value="C:plasma membrane"/>
    <property type="evidence" value="ECO:0007669"/>
    <property type="project" value="UniProtKB-SubCell"/>
</dbReference>
<dbReference type="GO" id="GO:0022857">
    <property type="term" value="F:transmembrane transporter activity"/>
    <property type="evidence" value="ECO:0007669"/>
    <property type="project" value="UniProtKB-UniRule"/>
</dbReference>
<dbReference type="CDD" id="cd17503">
    <property type="entry name" value="MFS_LmrB_MDR_like"/>
    <property type="match status" value="1"/>
</dbReference>
<dbReference type="FunFam" id="1.20.1250.20:FF:000021">
    <property type="entry name" value="Putative multidrug resistance protein MdtD"/>
    <property type="match status" value="1"/>
</dbReference>
<dbReference type="FunFam" id="1.20.1720.10:FF:000001">
    <property type="entry name" value="Putative multidrug resistance protein MdtD"/>
    <property type="match status" value="1"/>
</dbReference>
<dbReference type="Gene3D" id="1.20.1250.20">
    <property type="entry name" value="MFS general substrate transporter like domains"/>
    <property type="match status" value="1"/>
</dbReference>
<dbReference type="Gene3D" id="1.20.1720.10">
    <property type="entry name" value="Multidrug resistance protein D"/>
    <property type="match status" value="1"/>
</dbReference>
<dbReference type="HAMAP" id="MF_01577">
    <property type="entry name" value="MFS_MdtD"/>
    <property type="match status" value="1"/>
</dbReference>
<dbReference type="InterPro" id="IPR011701">
    <property type="entry name" value="MFS"/>
</dbReference>
<dbReference type="InterPro" id="IPR020846">
    <property type="entry name" value="MFS_dom"/>
</dbReference>
<dbReference type="InterPro" id="IPR036259">
    <property type="entry name" value="MFS_trans_sf"/>
</dbReference>
<dbReference type="InterPro" id="IPR023721">
    <property type="entry name" value="Multi-R_MdtD"/>
</dbReference>
<dbReference type="NCBIfam" id="NF007799">
    <property type="entry name" value="PRK10504.1"/>
    <property type="match status" value="1"/>
</dbReference>
<dbReference type="PANTHER" id="PTHR42718:SF46">
    <property type="entry name" value="BLR6921 PROTEIN"/>
    <property type="match status" value="1"/>
</dbReference>
<dbReference type="PANTHER" id="PTHR42718">
    <property type="entry name" value="MAJOR FACILITATOR SUPERFAMILY MULTIDRUG TRANSPORTER MFSC"/>
    <property type="match status" value="1"/>
</dbReference>
<dbReference type="Pfam" id="PF07690">
    <property type="entry name" value="MFS_1"/>
    <property type="match status" value="1"/>
</dbReference>
<dbReference type="PRINTS" id="PR01036">
    <property type="entry name" value="TCRTETB"/>
</dbReference>
<dbReference type="SUPFAM" id="SSF103473">
    <property type="entry name" value="MFS general substrate transporter"/>
    <property type="match status" value="1"/>
</dbReference>
<dbReference type="PROSITE" id="PS50850">
    <property type="entry name" value="MFS"/>
    <property type="match status" value="1"/>
</dbReference>
<protein>
    <recommendedName>
        <fullName evidence="1">Putative multidrug resistance protein MdtD</fullName>
    </recommendedName>
</protein>
<gene>
    <name evidence="1" type="primary">mdtD</name>
    <name type="ordered locus">YE1106</name>
</gene>